<evidence type="ECO:0000255" key="1">
    <source>
        <dbReference type="HAMAP-Rule" id="MF_01398"/>
    </source>
</evidence>
<name>ATPF_BACAN</name>
<sequence length="168" mass="18957">MPTLLLGAAIPFGTIAYTLFIFLLLLVMLRKFAWGPLMGIMKEREEHVANEIDAAERNNAEAKKLVEEQREMLKQSRVEAQELIERAKKQAVDQKDVIVAAAKEEAESIKASAVQEIQREKEQAIAALQEQVASLSVQIASKVIEKELKEEDQVKLIRDYIKEVGEAR</sequence>
<comment type="function">
    <text evidence="1">F(1)F(0) ATP synthase produces ATP from ADP in the presence of a proton or sodium gradient. F-type ATPases consist of two structural domains, F(1) containing the extramembraneous catalytic core and F(0) containing the membrane proton channel, linked together by a central stalk and a peripheral stalk. During catalysis, ATP synthesis in the catalytic domain of F(1) is coupled via a rotary mechanism of the central stalk subunits to proton translocation.</text>
</comment>
<comment type="function">
    <text evidence="1">Component of the F(0) channel, it forms part of the peripheral stalk, linking F(1) to F(0).</text>
</comment>
<comment type="subunit">
    <text evidence="1">F-type ATPases have 2 components, F(1) - the catalytic core - and F(0) - the membrane proton channel. F(1) has five subunits: alpha(3), beta(3), gamma(1), delta(1), epsilon(1). F(0) has three main subunits: a(1), b(2) and c(10-14). The alpha and beta chains form an alternating ring which encloses part of the gamma chain. F(1) is attached to F(0) by a central stalk formed by the gamma and epsilon chains, while a peripheral stalk is formed by the delta and b chains.</text>
</comment>
<comment type="subcellular location">
    <subcellularLocation>
        <location evidence="1">Cell membrane</location>
        <topology evidence="1">Single-pass membrane protein</topology>
    </subcellularLocation>
</comment>
<comment type="similarity">
    <text evidence="1">Belongs to the ATPase B chain family.</text>
</comment>
<accession>Q81JZ1</accession>
<accession>Q6HQJ0</accession>
<accession>Q6KJW5</accession>
<gene>
    <name evidence="1" type="primary">atpF</name>
    <name type="ordered locus">BA_5551</name>
    <name type="ordered locus">GBAA_5551</name>
    <name type="ordered locus">BAS5159</name>
</gene>
<reference key="1">
    <citation type="journal article" date="2003" name="Nature">
        <title>The genome sequence of Bacillus anthracis Ames and comparison to closely related bacteria.</title>
        <authorList>
            <person name="Read T.D."/>
            <person name="Peterson S.N."/>
            <person name="Tourasse N.J."/>
            <person name="Baillie L.W."/>
            <person name="Paulsen I.T."/>
            <person name="Nelson K.E."/>
            <person name="Tettelin H."/>
            <person name="Fouts D.E."/>
            <person name="Eisen J.A."/>
            <person name="Gill S.R."/>
            <person name="Holtzapple E.K."/>
            <person name="Okstad O.A."/>
            <person name="Helgason E."/>
            <person name="Rilstone J."/>
            <person name="Wu M."/>
            <person name="Kolonay J.F."/>
            <person name="Beanan M.J."/>
            <person name="Dodson R.J."/>
            <person name="Brinkac L.M."/>
            <person name="Gwinn M.L."/>
            <person name="DeBoy R.T."/>
            <person name="Madpu R."/>
            <person name="Daugherty S.C."/>
            <person name="Durkin A.S."/>
            <person name="Haft D.H."/>
            <person name="Nelson W.C."/>
            <person name="Peterson J.D."/>
            <person name="Pop M."/>
            <person name="Khouri H.M."/>
            <person name="Radune D."/>
            <person name="Benton J.L."/>
            <person name="Mahamoud Y."/>
            <person name="Jiang L."/>
            <person name="Hance I.R."/>
            <person name="Weidman J.F."/>
            <person name="Berry K.J."/>
            <person name="Plaut R.D."/>
            <person name="Wolf A.M."/>
            <person name="Watkins K.L."/>
            <person name="Nierman W.C."/>
            <person name="Hazen A."/>
            <person name="Cline R.T."/>
            <person name="Redmond C."/>
            <person name="Thwaite J.E."/>
            <person name="White O."/>
            <person name="Salzberg S.L."/>
            <person name="Thomason B."/>
            <person name="Friedlander A.M."/>
            <person name="Koehler T.M."/>
            <person name="Hanna P.C."/>
            <person name="Kolstoe A.-B."/>
            <person name="Fraser C.M."/>
        </authorList>
    </citation>
    <scope>NUCLEOTIDE SEQUENCE [LARGE SCALE GENOMIC DNA]</scope>
    <source>
        <strain>Ames / isolate Porton</strain>
    </source>
</reference>
<reference key="2">
    <citation type="submission" date="2004-01" db="EMBL/GenBank/DDBJ databases">
        <title>Complete genome sequence of Bacillus anthracis Sterne.</title>
        <authorList>
            <person name="Brettin T.S."/>
            <person name="Bruce D."/>
            <person name="Challacombe J.F."/>
            <person name="Gilna P."/>
            <person name="Han C."/>
            <person name="Hill K."/>
            <person name="Hitchcock P."/>
            <person name="Jackson P."/>
            <person name="Keim P."/>
            <person name="Longmire J."/>
            <person name="Lucas S."/>
            <person name="Okinaka R."/>
            <person name="Richardson P."/>
            <person name="Rubin E."/>
            <person name="Tice H."/>
        </authorList>
    </citation>
    <scope>NUCLEOTIDE SEQUENCE [LARGE SCALE GENOMIC DNA]</scope>
    <source>
        <strain>Sterne</strain>
    </source>
</reference>
<reference key="3">
    <citation type="journal article" date="2009" name="J. Bacteriol.">
        <title>The complete genome sequence of Bacillus anthracis Ames 'Ancestor'.</title>
        <authorList>
            <person name="Ravel J."/>
            <person name="Jiang L."/>
            <person name="Stanley S.T."/>
            <person name="Wilson M.R."/>
            <person name="Decker R.S."/>
            <person name="Read T.D."/>
            <person name="Worsham P."/>
            <person name="Keim P.S."/>
            <person name="Salzberg S.L."/>
            <person name="Fraser-Liggett C.M."/>
            <person name="Rasko D.A."/>
        </authorList>
    </citation>
    <scope>NUCLEOTIDE SEQUENCE [LARGE SCALE GENOMIC DNA]</scope>
    <source>
        <strain>Ames ancestor</strain>
    </source>
</reference>
<organism>
    <name type="scientific">Bacillus anthracis</name>
    <dbReference type="NCBI Taxonomy" id="1392"/>
    <lineage>
        <taxon>Bacteria</taxon>
        <taxon>Bacillati</taxon>
        <taxon>Bacillota</taxon>
        <taxon>Bacilli</taxon>
        <taxon>Bacillales</taxon>
        <taxon>Bacillaceae</taxon>
        <taxon>Bacillus</taxon>
        <taxon>Bacillus cereus group</taxon>
    </lineage>
</organism>
<protein>
    <recommendedName>
        <fullName evidence="1">ATP synthase subunit b</fullName>
    </recommendedName>
    <alternativeName>
        <fullName evidence="1">ATP synthase F(0) sector subunit b</fullName>
    </alternativeName>
    <alternativeName>
        <fullName evidence="1">ATPase subunit I</fullName>
    </alternativeName>
    <alternativeName>
        <fullName evidence="1">F-type ATPase subunit b</fullName>
        <shortName evidence="1">F-ATPase subunit b</shortName>
    </alternativeName>
</protein>
<proteinExistence type="inferred from homology"/>
<feature type="chain" id="PRO_0000368322" description="ATP synthase subunit b">
    <location>
        <begin position="1"/>
        <end position="168"/>
    </location>
</feature>
<feature type="transmembrane region" description="Helical" evidence="1">
    <location>
        <begin position="9"/>
        <end position="29"/>
    </location>
</feature>
<dbReference type="EMBL" id="AE016879">
    <property type="protein sequence ID" value="AAP29195.1"/>
    <property type="molecule type" value="Genomic_DNA"/>
</dbReference>
<dbReference type="EMBL" id="AE017334">
    <property type="protein sequence ID" value="AAT34695.1"/>
    <property type="molecule type" value="Genomic_DNA"/>
</dbReference>
<dbReference type="EMBL" id="AE017225">
    <property type="protein sequence ID" value="AAT57448.1"/>
    <property type="molecule type" value="Genomic_DNA"/>
</dbReference>
<dbReference type="RefSeq" id="NP_847709.1">
    <property type="nucleotide sequence ID" value="NC_003997.3"/>
</dbReference>
<dbReference type="RefSeq" id="WP_001142616.1">
    <property type="nucleotide sequence ID" value="NZ_WXXJ01000038.1"/>
</dbReference>
<dbReference type="RefSeq" id="YP_031398.1">
    <property type="nucleotide sequence ID" value="NC_005945.1"/>
</dbReference>
<dbReference type="SMR" id="Q81JZ1"/>
<dbReference type="STRING" id="261594.GBAA_5551"/>
<dbReference type="DNASU" id="1085236"/>
<dbReference type="GeneID" id="45025139"/>
<dbReference type="KEGG" id="ban:BA_5551"/>
<dbReference type="KEGG" id="bar:GBAA_5551"/>
<dbReference type="KEGG" id="bat:BAS5159"/>
<dbReference type="PATRIC" id="fig|198094.11.peg.5511"/>
<dbReference type="eggNOG" id="COG0711">
    <property type="taxonomic scope" value="Bacteria"/>
</dbReference>
<dbReference type="HOGENOM" id="CLU_079215_4_2_9"/>
<dbReference type="OMA" id="ILAWFTM"/>
<dbReference type="OrthoDB" id="282095at2"/>
<dbReference type="Proteomes" id="UP000000427">
    <property type="component" value="Chromosome"/>
</dbReference>
<dbReference type="Proteomes" id="UP000000594">
    <property type="component" value="Chromosome"/>
</dbReference>
<dbReference type="GO" id="GO:0005886">
    <property type="term" value="C:plasma membrane"/>
    <property type="evidence" value="ECO:0007669"/>
    <property type="project" value="UniProtKB-SubCell"/>
</dbReference>
<dbReference type="GO" id="GO:0045259">
    <property type="term" value="C:proton-transporting ATP synthase complex"/>
    <property type="evidence" value="ECO:0007669"/>
    <property type="project" value="UniProtKB-KW"/>
</dbReference>
<dbReference type="GO" id="GO:0046933">
    <property type="term" value="F:proton-transporting ATP synthase activity, rotational mechanism"/>
    <property type="evidence" value="ECO:0007669"/>
    <property type="project" value="UniProtKB-UniRule"/>
</dbReference>
<dbReference type="GO" id="GO:0046961">
    <property type="term" value="F:proton-transporting ATPase activity, rotational mechanism"/>
    <property type="evidence" value="ECO:0007669"/>
    <property type="project" value="TreeGrafter"/>
</dbReference>
<dbReference type="CDD" id="cd06503">
    <property type="entry name" value="ATP-synt_Fo_b"/>
    <property type="match status" value="1"/>
</dbReference>
<dbReference type="Gene3D" id="6.10.250.1580">
    <property type="match status" value="1"/>
</dbReference>
<dbReference type="HAMAP" id="MF_01398">
    <property type="entry name" value="ATP_synth_b_bprime"/>
    <property type="match status" value="1"/>
</dbReference>
<dbReference type="InterPro" id="IPR028987">
    <property type="entry name" value="ATP_synth_B-like_membr_sf"/>
</dbReference>
<dbReference type="InterPro" id="IPR002146">
    <property type="entry name" value="ATP_synth_b/b'su_bac/chlpt"/>
</dbReference>
<dbReference type="InterPro" id="IPR005864">
    <property type="entry name" value="ATP_synth_F0_bsu_bac"/>
</dbReference>
<dbReference type="InterPro" id="IPR050059">
    <property type="entry name" value="ATP_synthase_B_chain"/>
</dbReference>
<dbReference type="NCBIfam" id="TIGR01144">
    <property type="entry name" value="ATP_synt_b"/>
    <property type="match status" value="1"/>
</dbReference>
<dbReference type="PANTHER" id="PTHR33445:SF1">
    <property type="entry name" value="ATP SYNTHASE SUBUNIT B"/>
    <property type="match status" value="1"/>
</dbReference>
<dbReference type="PANTHER" id="PTHR33445">
    <property type="entry name" value="ATP SYNTHASE SUBUNIT B', CHLOROPLASTIC"/>
    <property type="match status" value="1"/>
</dbReference>
<dbReference type="Pfam" id="PF00430">
    <property type="entry name" value="ATP-synt_B"/>
    <property type="match status" value="1"/>
</dbReference>
<dbReference type="SUPFAM" id="SSF81573">
    <property type="entry name" value="F1F0 ATP synthase subunit B, membrane domain"/>
    <property type="match status" value="1"/>
</dbReference>
<keyword id="KW-0066">ATP synthesis</keyword>
<keyword id="KW-1003">Cell membrane</keyword>
<keyword id="KW-0138">CF(0)</keyword>
<keyword id="KW-0375">Hydrogen ion transport</keyword>
<keyword id="KW-0406">Ion transport</keyword>
<keyword id="KW-0472">Membrane</keyword>
<keyword id="KW-1185">Reference proteome</keyword>
<keyword id="KW-0812">Transmembrane</keyword>
<keyword id="KW-1133">Transmembrane helix</keyword>
<keyword id="KW-0813">Transport</keyword>